<comment type="function">
    <text evidence="4 7 8 9">Acts as a component of the mcm2-7 complex (mcm complex) which is the putative replicative helicase essential for 'once per cell cycle' DNA replication initiation and elongation in eukaryotic cells. The active ATPase sites in the mcm2-7 ring are formed through the interaction surfaces of two neighboring subunits such that a critical structure of a conserved arginine finger motif is provided in trans relative to the ATP-binding site of the Walker A box of the adjacent subunit. The six ATPase active sites, however, are likely to contribute differentially to the complex helicase activity. The existence of maternal and zygotic forms of mcm3 and mcm6 suggests that specific forms of mcm2-7 complexes may be used during different stages of development.</text>
</comment>
<comment type="catalytic activity">
    <reaction evidence="2">
        <text>ATP + H2O = ADP + phosphate + H(+)</text>
        <dbReference type="Rhea" id="RHEA:13065"/>
        <dbReference type="ChEBI" id="CHEBI:15377"/>
        <dbReference type="ChEBI" id="CHEBI:15378"/>
        <dbReference type="ChEBI" id="CHEBI:30616"/>
        <dbReference type="ChEBI" id="CHEBI:43474"/>
        <dbReference type="ChEBI" id="CHEBI:456216"/>
        <dbReference type="EC" id="3.6.4.12"/>
    </reaction>
    <physiologicalReaction direction="left-to-right" evidence="2">
        <dbReference type="Rhea" id="RHEA:13066"/>
    </physiologicalReaction>
</comment>
<comment type="subunit">
    <text evidence="1 4 5 6 7 8 9 10 11">Component of the mcm2-7 complex (RLF-M) (PubMed:16369567, PubMed:8816774, PubMed:9214646, PubMed:9214647, PubMed:9851868). The complex forms a toroidal hexameric ring with the proposed subunit order mcm2-mcm6-mcm4-mcm7-mcm3-mcm5 (PubMed:16369567, PubMed:8816774, PubMed:9214646, PubMed:9214647, PubMed:9851868). The heterodimer of mmcm3/mcm5 interacts with mcm4, mmcm6, mcm7 and weakly with mcm2 (PubMed:16369567, PubMed:8816774, PubMed:9214646, PubMed:9214647, PubMed:9851868). The N-terminus is required for interaction with mmcm3, though this interaction may not be direct, and remains in a complex with mmcm3 throughout the cell cycle (PubMed:16369567, PubMed:8816774, PubMed:9214646, PubMed:9214647, PubMed:9851868). Begins to associate with zmcm6 at the neurula stage (PubMed:9512418). Component of the replisome complex (By similarity). Component of the CMG helicase complex, composed of the mcm2-7 complex, the GINS complex and cdc45 (PubMed:30842657, PubMed:30979826).</text>
</comment>
<comment type="interaction">
    <interactant intactId="EBI-876852">
        <id>Q91876</id>
    </interactant>
    <interactant intactId="EBI-3511304">
        <id>P70032</id>
        <label>plk1</label>
    </interactant>
    <organismsDiffer>false</organismsDiffer>
    <experiments>3</experiments>
</comment>
<comment type="subcellular location">
    <subcellularLocation>
        <location evidence="7 8 9">Nucleus</location>
    </subcellularLocation>
    <subcellularLocation>
        <location evidence="7 8 9">Chromosome</location>
    </subcellularLocation>
    <text evidence="7 8 9">Associated with chromatin before the formation of nuclei and detaches from it as DNA replication progresses.</text>
</comment>
<comment type="developmental stage">
    <text evidence="10">Present at constant levels throughout development.</text>
</comment>
<comment type="PTM">
    <text evidence="5 6">Ubiquitinated by traip when forks converge following formation of DNA interstrand cross-links (PubMed:30842657, PubMed:30979826). Ubiquitinated via 'Lys-6'- and 'Lys-63'-linked polyubiquitination by traip (PubMed:30979826). Short ubiquitin chains on mcm7 promote recruitment of DNA glycosylase neil3 (PubMed:30842657, PubMed:30979826). If the interstrand cross-link cannot be cleaved by neil3, the ubiquitin chains continue to grow on mcm7, promoting the unloading of the CMG helicase complex by the vcp/p97 ATPase (PubMed:30842657, PubMed:30979826).</text>
</comment>
<comment type="miscellaneous">
    <text evidence="2">Early fractionation of eukaryotic MCM proteins yielded a variety of dimeric, trimeric and tetrameric complexes with unclear biological significance. Specifically a MCM467 subcomplex is shown to have in vitro helicase activity which is inhibited by the MCM2 subunit. The MCM2-7 hexamer is the proposed physiological active complex.</text>
</comment>
<comment type="similarity">
    <text evidence="12">Belongs to the MCM family.</text>
</comment>
<sequence>MPRDYQTEKEKCKTFLQEFYKDDEIGKKHFKYGVQLANIAHREQVALYIDLDDLAEEDPELVDAICENTRRYTNLFADAVQELLPQYKEREVVHKDALDVYIEHRLMMEQRGRDPNEMRDSQNQYPPELMRRFELYFKAPSSSKARVVRDVKADSIGKLVNIRGIVTRVTEVKPMMVVATYTCDQCGAETYQPIQSPTFMPLIMCPSRECQTNRSGGRLYLQTRGSKFIKFQELKIQEHSDQVPVGNIPRCMSVYVRGENTRLAQPGDHVGITGVFLPMLRTGFRQVVQGLLSETYLECHRLVKMNKSEDDELGTEELSEEELRQITEEDFYEKLAASIAPEIYGHEDVKKALLLLLVGGVDNSPRGMKIRGNINICLMGDPGVAKSQLLSYIDRLAPRSQYTTGRGSSGVGLTAAVMKDPVTGEMTLEGGALVLADQGVCCIDEFDKMMDTDRTAIHEVMEQQTISIAKAGIMTTLNARCSILAAANPAYGRYNPKKTVEQNIQLPAALLSRFDVLWLIQDKPDRDNDLRLAQHITYVHQHSKQPPSQFQPLDMKLMRRYITMCKRKQPAIPEALADYLTAAYVEMRKEARTNKDMTFTSARTLLSVLRLSTALARLRLEDVVEKEDVNEAMRLMEMSKDSLLGDKGHTSRTQRPADVIFSTIREMVPEKGARSVKYSEAEQRCVSKGFTPAQFEAALEEYEELNVWLVNQARTKITFV</sequence>
<keyword id="KW-0067">ATP-binding</keyword>
<keyword id="KW-0131">Cell cycle</keyword>
<keyword id="KW-0158">Chromosome</keyword>
<keyword id="KW-0235">DNA replication</keyword>
<keyword id="KW-0238">DNA-binding</keyword>
<keyword id="KW-0347">Helicase</keyword>
<keyword id="KW-0378">Hydrolase</keyword>
<keyword id="KW-0479">Metal-binding</keyword>
<keyword id="KW-0547">Nucleotide-binding</keyword>
<keyword id="KW-0539">Nucleus</keyword>
<keyword id="KW-1185">Reference proteome</keyword>
<keyword id="KW-0832">Ubl conjugation</keyword>
<keyword id="KW-0862">Zinc</keyword>
<keyword id="KW-0863">Zinc-finger</keyword>
<reference key="1">
    <citation type="journal article" date="1996" name="Proc. Natl. Acad. Sci. U.S.A.">
        <title>XMCM7, a novel member of the Xenopus MCM family, interacts with XMCM3 and colocalizes with it throughout replication.</title>
        <authorList>
            <person name="Romanowski P."/>
            <person name="Madine M.A."/>
            <person name="Laskey R.A."/>
        </authorList>
    </citation>
    <scope>NUCLEOTIDE SEQUENCE [MRNA]</scope>
    <scope>FUNCTION</scope>
    <scope>INTERACTION WITH MMCM3</scope>
    <scope>IDENTIFICATION IN A COMPLEX WITH MCM2; MMCM3; MCM4 AND MCM5</scope>
    <scope>SUBCELLULAR LOCATION</scope>
    <source>
        <tissue>Egg</tissue>
    </source>
</reference>
<reference key="2">
    <citation type="journal article" date="1997" name="EMBO J.">
        <title>Licensing of DNA replication by a multi-protein complex of MCM/P1 proteins in Xenopus eggs.</title>
        <authorList>
            <person name="Kubota Y."/>
            <person name="Mimura S."/>
            <person name="Nishimoto S."/>
            <person name="Masuda T."/>
            <person name="Nojima H."/>
            <person name="Takisawa H."/>
        </authorList>
    </citation>
    <scope>NUCLEOTIDE SEQUENCE [MRNA]</scope>
    <scope>FUNCTION</scope>
    <scope>IDENTIFICATION IN A COMPLEX WITH MCM2; MMCM3; MCM4; MCM5 AND MMCM6</scope>
    <scope>SUBCELLULAR LOCATION</scope>
    <source>
        <tissue>Oocyte</tissue>
    </source>
</reference>
<reference key="3">
    <citation type="submission" date="2004-06" db="EMBL/GenBank/DDBJ databases">
        <authorList>
            <consortium name="NIH - Xenopus Gene Collection (XGC) project"/>
        </authorList>
    </citation>
    <scope>NUCLEOTIDE SEQUENCE [LARGE SCALE MRNA]</scope>
    <source>
        <tissue>Embryo</tissue>
    </source>
</reference>
<reference key="4">
    <citation type="journal article" date="1997" name="EMBO J.">
        <title>The RLF-M component of the replication licensing system forms complexes containing all six MCM/P1 polypeptides.</title>
        <authorList>
            <person name="Thommes P."/>
            <person name="Kubota Y."/>
            <person name="Takisawa H."/>
            <person name="Blow J.J."/>
        </authorList>
    </citation>
    <scope>FUNCTION</scope>
    <scope>IDENTIFICATION IN RLF-M COMPLEX</scope>
    <scope>SUBCELLULAR LOCATION</scope>
</reference>
<reference key="5">
    <citation type="journal article" date="1998" name="Curr. Biol.">
        <title>Developmental regulation of MCM replication factors in Xenopus laevis.</title>
        <authorList>
            <person name="Sible J.C."/>
            <person name="Erikson E."/>
            <person name="Hendrickson M."/>
            <person name="Maller J.L."/>
            <person name="Gautier J."/>
        </authorList>
    </citation>
    <scope>IDENTIFICATION IN A COMPLEX WITH ZMCM6</scope>
    <scope>DEVELOPMENTAL STAGE</scope>
</reference>
<reference key="6">
    <citation type="journal article" date="1998" name="Exp. Cell Res.">
        <title>Evidence for different MCM subcomplexes with differential binding to chromatin in Xenopus.</title>
        <authorList>
            <person name="Coue M."/>
            <person name="Amariglio F."/>
            <person name="Maiorano D."/>
            <person name="Bocquet S."/>
            <person name="Mechali M."/>
        </authorList>
    </citation>
    <scope>IDENTIFICATION IN MCM COMPLEXES</scope>
</reference>
<reference key="7">
    <citation type="journal article" date="2005" name="EMBO J.">
        <title>The ATPase activity of MCM2-7 is dispensable for pre-RC assembly but is required for DNA unwinding.</title>
        <authorList>
            <person name="Ying C.Y."/>
            <person name="Gautier J."/>
        </authorList>
    </citation>
    <scope>FUNCTION</scope>
    <scope>IDENTIFICATION IN A COMPLEX WITH MCM2; MMCM3; MCM4; MCM5 AND MMCM6</scope>
    <scope>MUTAGENESIS OF LYS-386</scope>
</reference>
<reference key="8">
    <citation type="journal article" date="2019" name="Life. Sci Alliance">
        <title>Mitotic replisome disassembly depends on TRAIP ubiquitin ligase activity.</title>
        <authorList>
            <person name="Priego Moreno S."/>
            <person name="Jones R.M."/>
            <person name="Poovathumkadavil D."/>
            <person name="Scaramuzza S."/>
            <person name="Gambus A."/>
        </authorList>
    </citation>
    <scope>UBIQUITINATION</scope>
    <scope>IDENTIFICATION IN THE CMG HELICASE COMPLEX</scope>
</reference>
<reference key="9">
    <citation type="journal article" date="2019" name="Nature">
        <title>TRAIP is a master regulator of DNA interstrand crosslink repair.</title>
        <authorList>
            <person name="Wu R.A."/>
            <person name="Semlow D.R."/>
            <person name="Kamimae-Lanning A.N."/>
            <person name="Kochenova O.V."/>
            <person name="Chistol G."/>
            <person name="Hodskinson M.R."/>
            <person name="Amunugama R."/>
            <person name="Sparks J.L."/>
            <person name="Wang M."/>
            <person name="Deng L."/>
            <person name="Mimoso C.A."/>
            <person name="Low E."/>
            <person name="Patel K.J."/>
            <person name="Walter J.C."/>
        </authorList>
    </citation>
    <scope>UBIQUITINATION</scope>
    <scope>IDENTIFICATION IN THE CMG HELICASE COMPLEX</scope>
</reference>
<dbReference type="EC" id="3.6.4.12" evidence="2"/>
<dbReference type="EMBL" id="U51234">
    <property type="protein sequence ID" value="AAB17253.1"/>
    <property type="molecule type" value="mRNA"/>
</dbReference>
<dbReference type="EMBL" id="U44051">
    <property type="protein sequence ID" value="AAC60227.1"/>
    <property type="molecule type" value="mRNA"/>
</dbReference>
<dbReference type="EMBL" id="BC072932">
    <property type="protein sequence ID" value="AAH72932.1"/>
    <property type="molecule type" value="mRNA"/>
</dbReference>
<dbReference type="PIR" id="T47221">
    <property type="entry name" value="T47221"/>
</dbReference>
<dbReference type="RefSeq" id="NP_001081466.1">
    <property type="nucleotide sequence ID" value="NM_001087997.1"/>
</dbReference>
<dbReference type="SMR" id="Q91876"/>
<dbReference type="BioGRID" id="99191">
    <property type="interactions" value="2"/>
</dbReference>
<dbReference type="ComplexPortal" id="CPX-2943">
    <property type="entry name" value="MCM complex"/>
</dbReference>
<dbReference type="IntAct" id="Q91876">
    <property type="interactions" value="6"/>
</dbReference>
<dbReference type="MINT" id="Q91876"/>
<dbReference type="DNASU" id="397852"/>
<dbReference type="GeneID" id="397852"/>
<dbReference type="KEGG" id="xla:397852"/>
<dbReference type="AGR" id="Xenbase:XB-GENE-5946952"/>
<dbReference type="CTD" id="397852"/>
<dbReference type="Xenbase" id="XB-GENE-5946952">
    <property type="gene designation" value="mcm7.S"/>
</dbReference>
<dbReference type="OrthoDB" id="3207464at2759"/>
<dbReference type="Proteomes" id="UP000186698">
    <property type="component" value="Chromosome 3S"/>
</dbReference>
<dbReference type="Bgee" id="397852">
    <property type="expression patterns" value="Expressed in egg cell and 18 other cell types or tissues"/>
</dbReference>
<dbReference type="GO" id="GO:0000785">
    <property type="term" value="C:chromatin"/>
    <property type="evidence" value="ECO:0000314"/>
    <property type="project" value="UniProtKB"/>
</dbReference>
<dbReference type="GO" id="GO:0071162">
    <property type="term" value="C:CMG complex"/>
    <property type="evidence" value="ECO:0000314"/>
    <property type="project" value="UniProtKB"/>
</dbReference>
<dbReference type="GO" id="GO:0042555">
    <property type="term" value="C:MCM complex"/>
    <property type="evidence" value="ECO:0000314"/>
    <property type="project" value="UniProtKB"/>
</dbReference>
<dbReference type="GO" id="GO:0005634">
    <property type="term" value="C:nucleus"/>
    <property type="evidence" value="ECO:0000318"/>
    <property type="project" value="GO_Central"/>
</dbReference>
<dbReference type="GO" id="GO:0005524">
    <property type="term" value="F:ATP binding"/>
    <property type="evidence" value="ECO:0007669"/>
    <property type="project" value="UniProtKB-KW"/>
</dbReference>
<dbReference type="GO" id="GO:0016887">
    <property type="term" value="F:ATP hydrolysis activity"/>
    <property type="evidence" value="ECO:0007669"/>
    <property type="project" value="InterPro"/>
</dbReference>
<dbReference type="GO" id="GO:0003697">
    <property type="term" value="F:single-stranded DNA binding"/>
    <property type="evidence" value="ECO:0000318"/>
    <property type="project" value="GO_Central"/>
</dbReference>
<dbReference type="GO" id="GO:0017116">
    <property type="term" value="F:single-stranded DNA helicase activity"/>
    <property type="evidence" value="ECO:0007669"/>
    <property type="project" value="TreeGrafter"/>
</dbReference>
<dbReference type="GO" id="GO:0008270">
    <property type="term" value="F:zinc ion binding"/>
    <property type="evidence" value="ECO:0007669"/>
    <property type="project" value="UniProtKB-KW"/>
</dbReference>
<dbReference type="GO" id="GO:0044786">
    <property type="term" value="P:cell cycle DNA replication"/>
    <property type="evidence" value="ECO:0000314"/>
    <property type="project" value="UniProtKB"/>
</dbReference>
<dbReference type="GO" id="GO:0006260">
    <property type="term" value="P:DNA replication"/>
    <property type="evidence" value="ECO:0000318"/>
    <property type="project" value="GO_Central"/>
</dbReference>
<dbReference type="GO" id="GO:0006270">
    <property type="term" value="P:DNA replication initiation"/>
    <property type="evidence" value="ECO:0000318"/>
    <property type="project" value="GO_Central"/>
</dbReference>
<dbReference type="GO" id="GO:0006271">
    <property type="term" value="P:DNA strand elongation involved in DNA replication"/>
    <property type="evidence" value="ECO:0000318"/>
    <property type="project" value="GO_Central"/>
</dbReference>
<dbReference type="GO" id="GO:0000727">
    <property type="term" value="P:double-strand break repair via break-induced replication"/>
    <property type="evidence" value="ECO:0000318"/>
    <property type="project" value="GO_Central"/>
</dbReference>
<dbReference type="GO" id="GO:0006279">
    <property type="term" value="P:premeiotic DNA replication"/>
    <property type="evidence" value="ECO:0000314"/>
    <property type="project" value="ComplexPortal"/>
</dbReference>
<dbReference type="GO" id="GO:0030174">
    <property type="term" value="P:regulation of DNA-templated DNA replication initiation"/>
    <property type="evidence" value="ECO:0000314"/>
    <property type="project" value="UniProtKB"/>
</dbReference>
<dbReference type="CDD" id="cd17758">
    <property type="entry name" value="MCM7"/>
    <property type="match status" value="1"/>
</dbReference>
<dbReference type="FunFam" id="2.20.28.10:FF:000004">
    <property type="entry name" value="DNA replication licensing factor MCM7"/>
    <property type="match status" value="1"/>
</dbReference>
<dbReference type="FunFam" id="3.30.1640.10:FF:000007">
    <property type="entry name" value="DNA replication licensing factor MCM7"/>
    <property type="match status" value="1"/>
</dbReference>
<dbReference type="FunFam" id="3.40.50.300:FF:000288">
    <property type="entry name" value="DNA replication licensing factor MCM7"/>
    <property type="match status" value="1"/>
</dbReference>
<dbReference type="Gene3D" id="2.20.28.10">
    <property type="match status" value="1"/>
</dbReference>
<dbReference type="Gene3D" id="3.30.1640.10">
    <property type="entry name" value="mini-chromosome maintenance (MCM) complex, chain A, domain 1"/>
    <property type="match status" value="1"/>
</dbReference>
<dbReference type="Gene3D" id="2.40.50.140">
    <property type="entry name" value="Nucleic acid-binding proteins"/>
    <property type="match status" value="1"/>
</dbReference>
<dbReference type="Gene3D" id="3.40.50.300">
    <property type="entry name" value="P-loop containing nucleotide triphosphate hydrolases"/>
    <property type="match status" value="1"/>
</dbReference>
<dbReference type="InterPro" id="IPR003593">
    <property type="entry name" value="AAA+_ATPase"/>
</dbReference>
<dbReference type="InterPro" id="IPR031327">
    <property type="entry name" value="MCM"/>
</dbReference>
<dbReference type="InterPro" id="IPR008050">
    <property type="entry name" value="MCM7"/>
</dbReference>
<dbReference type="InterPro" id="IPR018525">
    <property type="entry name" value="MCM_CS"/>
</dbReference>
<dbReference type="InterPro" id="IPR001208">
    <property type="entry name" value="MCM_dom"/>
</dbReference>
<dbReference type="InterPro" id="IPR041562">
    <property type="entry name" value="MCM_lid"/>
</dbReference>
<dbReference type="InterPro" id="IPR027925">
    <property type="entry name" value="MCM_N"/>
</dbReference>
<dbReference type="InterPro" id="IPR033762">
    <property type="entry name" value="MCM_OB"/>
</dbReference>
<dbReference type="InterPro" id="IPR012340">
    <property type="entry name" value="NA-bd_OB-fold"/>
</dbReference>
<dbReference type="InterPro" id="IPR027417">
    <property type="entry name" value="P-loop_NTPase"/>
</dbReference>
<dbReference type="PANTHER" id="PTHR11630">
    <property type="entry name" value="DNA REPLICATION LICENSING FACTOR MCM FAMILY MEMBER"/>
    <property type="match status" value="1"/>
</dbReference>
<dbReference type="PANTHER" id="PTHR11630:SF26">
    <property type="entry name" value="DNA REPLICATION LICENSING FACTOR MCM7"/>
    <property type="match status" value="1"/>
</dbReference>
<dbReference type="Pfam" id="PF24901">
    <property type="entry name" value="HTH_MCM7"/>
    <property type="match status" value="1"/>
</dbReference>
<dbReference type="Pfam" id="PF00493">
    <property type="entry name" value="MCM"/>
    <property type="match status" value="1"/>
</dbReference>
<dbReference type="Pfam" id="PF17855">
    <property type="entry name" value="MCM_lid"/>
    <property type="match status" value="1"/>
</dbReference>
<dbReference type="Pfam" id="PF14551">
    <property type="entry name" value="MCM_N"/>
    <property type="match status" value="1"/>
</dbReference>
<dbReference type="Pfam" id="PF17207">
    <property type="entry name" value="MCM_OB"/>
    <property type="match status" value="1"/>
</dbReference>
<dbReference type="PRINTS" id="PR01657">
    <property type="entry name" value="MCMFAMILY"/>
</dbReference>
<dbReference type="PRINTS" id="PR01663">
    <property type="entry name" value="MCMPROTEIN7"/>
</dbReference>
<dbReference type="SMART" id="SM00382">
    <property type="entry name" value="AAA"/>
    <property type="match status" value="1"/>
</dbReference>
<dbReference type="SMART" id="SM00350">
    <property type="entry name" value="MCM"/>
    <property type="match status" value="1"/>
</dbReference>
<dbReference type="SUPFAM" id="SSF50249">
    <property type="entry name" value="Nucleic acid-binding proteins"/>
    <property type="match status" value="1"/>
</dbReference>
<dbReference type="SUPFAM" id="SSF52540">
    <property type="entry name" value="P-loop containing nucleoside triphosphate hydrolases"/>
    <property type="match status" value="1"/>
</dbReference>
<dbReference type="PROSITE" id="PS00847">
    <property type="entry name" value="MCM_1"/>
    <property type="match status" value="1"/>
</dbReference>
<dbReference type="PROSITE" id="PS50051">
    <property type="entry name" value="MCM_2"/>
    <property type="match status" value="1"/>
</dbReference>
<feature type="chain" id="PRO_0000194121" description="DNA replication licensing factor mcm7-A">
    <location>
        <begin position="1"/>
        <end position="720"/>
    </location>
</feature>
<feature type="domain" description="MCM">
    <location>
        <begin position="331"/>
        <end position="537"/>
    </location>
</feature>
<feature type="zinc finger region" description="C4-type" evidence="3">
    <location>
        <begin position="183"/>
        <end position="210"/>
    </location>
</feature>
<feature type="short sequence motif" description="Arginine finger">
    <location>
        <begin position="512"/>
        <end position="515"/>
    </location>
</feature>
<feature type="binding site" evidence="1">
    <location>
        <position position="344"/>
    </location>
    <ligand>
        <name>ATP</name>
        <dbReference type="ChEBI" id="CHEBI:30616"/>
        <label>1</label>
        <note>ligand shared with MCM3</note>
    </ligand>
</feature>
<feature type="binding site" evidence="1">
    <location>
        <position position="383"/>
    </location>
    <ligand>
        <name>ATP</name>
        <dbReference type="ChEBI" id="CHEBI:30616"/>
        <label>1</label>
        <note>ligand shared with MCM3</note>
    </ligand>
</feature>
<feature type="binding site" evidence="1">
    <location>
        <position position="385"/>
    </location>
    <ligand>
        <name>ATP</name>
        <dbReference type="ChEBI" id="CHEBI:30616"/>
        <label>1</label>
        <note>ligand shared with MCM3</note>
    </ligand>
</feature>
<feature type="binding site" evidence="1">
    <location>
        <position position="386"/>
    </location>
    <ligand>
        <name>ATP</name>
        <dbReference type="ChEBI" id="CHEBI:30616"/>
        <label>1</label>
        <note>ligand shared with MCM3</note>
    </ligand>
</feature>
<feature type="binding site" evidence="1">
    <location>
        <position position="387"/>
    </location>
    <ligand>
        <name>ATP</name>
        <dbReference type="ChEBI" id="CHEBI:30616"/>
        <label>1</label>
        <note>ligand shared with MCM3</note>
    </ligand>
</feature>
<feature type="binding site" evidence="1">
    <location>
        <position position="488"/>
    </location>
    <ligand>
        <name>ATP</name>
        <dbReference type="ChEBI" id="CHEBI:30616"/>
        <label>1</label>
        <note>ligand shared with MCM3</note>
    </ligand>
</feature>
<feature type="binding site" evidence="1">
    <location>
        <position position="513"/>
    </location>
    <ligand>
        <name>ATP</name>
        <dbReference type="ChEBI" id="CHEBI:30616"/>
        <label>2</label>
        <note>ligand shared with MCM4</note>
    </ligand>
</feature>
<feature type="binding site" evidence="1">
    <location>
        <position position="603"/>
    </location>
    <ligand>
        <name>ATP</name>
        <dbReference type="ChEBI" id="CHEBI:30616"/>
        <label>2</label>
        <note>ligand shared with MCM4</note>
    </ligand>
</feature>
<feature type="mutagenesis site" description="Reduces ATPase activity of the mcm2-mcm7 complex and disrupts DNA replication. Does not disrupt formation of the pre-replicative complex onto chromatin. Abolishes ATPase activity of the mcm2-mcm7 complex; when associated with A-404 in mmcm6." evidence="4">
    <original>K</original>
    <variation>A</variation>
    <location>
        <position position="386"/>
    </location>
</feature>
<feature type="sequence conflict" description="In Ref. 1; AAB17253." evidence="12" ref="1">
    <original>I</original>
    <variation>V</variation>
    <location>
        <position position="162"/>
    </location>
</feature>
<feature type="sequence conflict" description="In Ref. 2; AAC60227." evidence="12" ref="2">
    <original>G</original>
    <variation>W</variation>
    <location>
        <position position="246"/>
    </location>
</feature>
<feature type="sequence conflict" description="In Ref. 2; AAC60227." evidence="12" ref="2">
    <original>V</original>
    <variation>L</variation>
    <location>
        <position position="287"/>
    </location>
</feature>
<feature type="sequence conflict" description="In Ref. 1; AAB17253." evidence="12" ref="1">
    <original>S</original>
    <variation>T</variation>
    <location>
        <position position="308"/>
    </location>
</feature>
<accession>Q91876</accession>
<accession>O42591</accession>
<accession>Q6GQ16</accession>
<protein>
    <recommendedName>
        <fullName>DNA replication licensing factor mcm7-A</fullName>
        <ecNumber evidence="2">3.6.4.12</ecNumber>
    </recommendedName>
    <alternativeName>
        <fullName>CDC47 homolog A</fullName>
    </alternativeName>
    <alternativeName>
        <fullName>CDC47p</fullName>
    </alternativeName>
    <alternativeName>
        <fullName>Minichromosome maintenance protein 7-A</fullName>
        <shortName>xMCM7-A</shortName>
    </alternativeName>
    <alternativeName>
        <fullName>p90</fullName>
    </alternativeName>
</protein>
<gene>
    <name type="primary">mcm7-a</name>
    <name type="synonym">cdc47</name>
</gene>
<proteinExistence type="evidence at protein level"/>
<name>MCM7A_XENLA</name>
<evidence type="ECO:0000250" key="1">
    <source>
        <dbReference type="UniProtKB" id="P33993"/>
    </source>
</evidence>
<evidence type="ECO:0000250" key="2">
    <source>
        <dbReference type="UniProtKB" id="Q61881"/>
    </source>
</evidence>
<evidence type="ECO:0000255" key="3"/>
<evidence type="ECO:0000269" key="4">
    <source>
    </source>
</evidence>
<evidence type="ECO:0000269" key="5">
    <source>
    </source>
</evidence>
<evidence type="ECO:0000269" key="6">
    <source>
    </source>
</evidence>
<evidence type="ECO:0000269" key="7">
    <source>
    </source>
</evidence>
<evidence type="ECO:0000269" key="8">
    <source>
    </source>
</evidence>
<evidence type="ECO:0000269" key="9">
    <source>
    </source>
</evidence>
<evidence type="ECO:0000269" key="10">
    <source>
    </source>
</evidence>
<evidence type="ECO:0000269" key="11">
    <source>
    </source>
</evidence>
<evidence type="ECO:0000305" key="12"/>
<organism>
    <name type="scientific">Xenopus laevis</name>
    <name type="common">African clawed frog</name>
    <dbReference type="NCBI Taxonomy" id="8355"/>
    <lineage>
        <taxon>Eukaryota</taxon>
        <taxon>Metazoa</taxon>
        <taxon>Chordata</taxon>
        <taxon>Craniata</taxon>
        <taxon>Vertebrata</taxon>
        <taxon>Euteleostomi</taxon>
        <taxon>Amphibia</taxon>
        <taxon>Batrachia</taxon>
        <taxon>Anura</taxon>
        <taxon>Pipoidea</taxon>
        <taxon>Pipidae</taxon>
        <taxon>Xenopodinae</taxon>
        <taxon>Xenopus</taxon>
        <taxon>Xenopus</taxon>
    </lineage>
</organism>